<organism>
    <name type="scientific">Homo sapiens</name>
    <name type="common">Human</name>
    <dbReference type="NCBI Taxonomy" id="9606"/>
    <lineage>
        <taxon>Eukaryota</taxon>
        <taxon>Metazoa</taxon>
        <taxon>Chordata</taxon>
        <taxon>Craniata</taxon>
        <taxon>Vertebrata</taxon>
        <taxon>Euteleostomi</taxon>
        <taxon>Mammalia</taxon>
        <taxon>Eutheria</taxon>
        <taxon>Euarchontoglires</taxon>
        <taxon>Primates</taxon>
        <taxon>Haplorrhini</taxon>
        <taxon>Catarrhini</taxon>
        <taxon>Hominidae</taxon>
        <taxon>Homo</taxon>
    </lineage>
</organism>
<dbReference type="EMBL" id="AY078398">
    <property type="protein sequence ID" value="AAL82892.1"/>
    <property type="molecule type" value="Genomic_DNA"/>
</dbReference>
<dbReference type="EMBL" id="AY078391">
    <property type="protein sequence ID" value="AAL82892.1"/>
    <property type="status" value="JOINED"/>
    <property type="molecule type" value="Genomic_DNA"/>
</dbReference>
<dbReference type="EMBL" id="AY078392">
    <property type="protein sequence ID" value="AAL82892.1"/>
    <property type="status" value="JOINED"/>
    <property type="molecule type" value="Genomic_DNA"/>
</dbReference>
<dbReference type="EMBL" id="AY078393">
    <property type="protein sequence ID" value="AAL82892.1"/>
    <property type="status" value="JOINED"/>
    <property type="molecule type" value="Genomic_DNA"/>
</dbReference>
<dbReference type="EMBL" id="AY078394">
    <property type="protein sequence ID" value="AAL82892.1"/>
    <property type="status" value="JOINED"/>
    <property type="molecule type" value="Genomic_DNA"/>
</dbReference>
<dbReference type="EMBL" id="AY078395">
    <property type="protein sequence ID" value="AAL82892.1"/>
    <property type="status" value="JOINED"/>
    <property type="molecule type" value="Genomic_DNA"/>
</dbReference>
<dbReference type="EMBL" id="AY078396">
    <property type="protein sequence ID" value="AAL82892.1"/>
    <property type="status" value="JOINED"/>
    <property type="molecule type" value="Genomic_DNA"/>
</dbReference>
<dbReference type="EMBL" id="AY078397">
    <property type="protein sequence ID" value="AAL82892.1"/>
    <property type="status" value="JOINED"/>
    <property type="molecule type" value="Genomic_DNA"/>
</dbReference>
<dbReference type="EMBL" id="AY078398">
    <property type="protein sequence ID" value="AAL82893.1"/>
    <property type="molecule type" value="Genomic_DNA"/>
</dbReference>
<dbReference type="EMBL" id="AY078396">
    <property type="protein sequence ID" value="AAL82893.1"/>
    <property type="status" value="JOINED"/>
    <property type="molecule type" value="Genomic_DNA"/>
</dbReference>
<dbReference type="EMBL" id="AY078397">
    <property type="protein sequence ID" value="AAL82893.1"/>
    <property type="status" value="JOINED"/>
    <property type="molecule type" value="Genomic_DNA"/>
</dbReference>
<dbReference type="EMBL" id="AK127724">
    <property type="protein sequence ID" value="BAG54558.1"/>
    <property type="molecule type" value="mRNA"/>
</dbReference>
<dbReference type="EMBL" id="AL160058">
    <property type="status" value="NOT_ANNOTATED_CDS"/>
    <property type="molecule type" value="Genomic_DNA"/>
</dbReference>
<dbReference type="EMBL" id="AL390730">
    <property type="status" value="NOT_ANNOTATED_CDS"/>
    <property type="molecule type" value="Genomic_DNA"/>
</dbReference>
<dbReference type="EMBL" id="CH471067">
    <property type="protein sequence ID" value="EAW90744.1"/>
    <property type="molecule type" value="Genomic_DNA"/>
</dbReference>
<dbReference type="EMBL" id="BC119743">
    <property type="protein sequence ID" value="AAI19744.1"/>
    <property type="molecule type" value="mRNA"/>
</dbReference>
<dbReference type="EMBL" id="BC119744">
    <property type="protein sequence ID" value="AAI19745.1"/>
    <property type="molecule type" value="mRNA"/>
</dbReference>
<dbReference type="CCDS" id="CCDS1247.1">
    <molecule id="Q8TE12-1"/>
</dbReference>
<dbReference type="RefSeq" id="NP_001167540.1">
    <molecule id="Q8TE12-1"/>
    <property type="nucleotide sequence ID" value="NM_001174069.2"/>
</dbReference>
<dbReference type="RefSeq" id="NP_796372.1">
    <molecule id="Q8TE12-1"/>
    <property type="nucleotide sequence ID" value="NM_177398.4"/>
</dbReference>
<dbReference type="PDB" id="8IK5">
    <property type="method" value="X-ray"/>
    <property type="resolution" value="1.99 A"/>
    <property type="chains" value="C=192-256"/>
</dbReference>
<dbReference type="PDB" id="8IKE">
    <property type="method" value="X-ray"/>
    <property type="resolution" value="2.60 A"/>
    <property type="chains" value="C=197-256"/>
</dbReference>
<dbReference type="PDB" id="8ILW">
    <property type="method" value="X-ray"/>
    <property type="resolution" value="2.71 A"/>
    <property type="chains" value="C=196-255"/>
</dbReference>
<dbReference type="PDBsum" id="8IK5"/>
<dbReference type="PDBsum" id="8IKE"/>
<dbReference type="PDBsum" id="8ILW"/>
<dbReference type="SMR" id="Q8TE12"/>
<dbReference type="BioGRID" id="110194">
    <property type="interactions" value="6"/>
</dbReference>
<dbReference type="FunCoup" id="Q8TE12">
    <property type="interactions" value="604"/>
</dbReference>
<dbReference type="IntAct" id="Q8TE12">
    <property type="interactions" value="4"/>
</dbReference>
<dbReference type="STRING" id="9606.ENSP00000340226"/>
<dbReference type="GlyGen" id="Q8TE12">
    <property type="glycosylation" value="1 site, 1 O-linked glycan (1 site)"/>
</dbReference>
<dbReference type="iPTMnet" id="Q8TE12"/>
<dbReference type="PhosphoSitePlus" id="Q8TE12"/>
<dbReference type="BioMuta" id="LMX1A"/>
<dbReference type="DMDM" id="27923801"/>
<dbReference type="jPOST" id="Q8TE12"/>
<dbReference type="MassIVE" id="Q8TE12"/>
<dbReference type="PaxDb" id="9606-ENSP00000340226"/>
<dbReference type="PeptideAtlas" id="Q8TE12"/>
<dbReference type="ProteomicsDB" id="74389">
    <molecule id="Q8TE12-1"/>
</dbReference>
<dbReference type="Antibodypedia" id="20523">
    <property type="antibodies" value="213 antibodies from 27 providers"/>
</dbReference>
<dbReference type="DNASU" id="4009"/>
<dbReference type="Ensembl" id="ENST00000294816.6">
    <molecule id="Q8TE12-1"/>
    <property type="protein sequence ID" value="ENSP00000294816.2"/>
    <property type="gene ID" value="ENSG00000162761.14"/>
</dbReference>
<dbReference type="Ensembl" id="ENST00000342310.7">
    <molecule id="Q8TE12-1"/>
    <property type="protein sequence ID" value="ENSP00000340226.3"/>
    <property type="gene ID" value="ENSG00000162761.14"/>
</dbReference>
<dbReference type="Ensembl" id="ENST00000367893.4">
    <molecule id="Q8TE12-1"/>
    <property type="protein sequence ID" value="ENSP00000356868.4"/>
    <property type="gene ID" value="ENSG00000162761.14"/>
</dbReference>
<dbReference type="GeneID" id="4009"/>
<dbReference type="KEGG" id="hsa:4009"/>
<dbReference type="MANE-Select" id="ENST00000342310.7">
    <property type="protein sequence ID" value="ENSP00000340226.3"/>
    <property type="RefSeq nucleotide sequence ID" value="NM_177398.4"/>
    <property type="RefSeq protein sequence ID" value="NP_796372.1"/>
</dbReference>
<dbReference type="UCSC" id="uc001gcz.3">
    <molecule id="Q8TE12-1"/>
    <property type="organism name" value="human"/>
</dbReference>
<dbReference type="AGR" id="HGNC:6653"/>
<dbReference type="CTD" id="4009"/>
<dbReference type="DisGeNET" id="4009"/>
<dbReference type="GeneCards" id="LMX1A"/>
<dbReference type="HGNC" id="HGNC:6653">
    <property type="gene designation" value="LMX1A"/>
</dbReference>
<dbReference type="HPA" id="ENSG00000162761">
    <property type="expression patterns" value="Tissue enriched (choroid)"/>
</dbReference>
<dbReference type="MalaCards" id="LMX1A"/>
<dbReference type="MIM" id="600298">
    <property type="type" value="gene"/>
</dbReference>
<dbReference type="MIM" id="601412">
    <property type="type" value="phenotype"/>
</dbReference>
<dbReference type="neXtProt" id="NX_Q8TE12"/>
<dbReference type="OpenTargets" id="ENSG00000162761"/>
<dbReference type="PharmGKB" id="PA30416"/>
<dbReference type="VEuPathDB" id="HostDB:ENSG00000162761"/>
<dbReference type="eggNOG" id="KOG0490">
    <property type="taxonomic scope" value="Eukaryota"/>
</dbReference>
<dbReference type="GeneTree" id="ENSGT00940000157774"/>
<dbReference type="HOGENOM" id="CLU_027802_0_0_1"/>
<dbReference type="InParanoid" id="Q8TE12"/>
<dbReference type="OMA" id="CKLGQAS"/>
<dbReference type="OrthoDB" id="6159439at2759"/>
<dbReference type="PAN-GO" id="Q8TE12">
    <property type="GO annotations" value="5 GO annotations based on evolutionary models"/>
</dbReference>
<dbReference type="PhylomeDB" id="Q8TE12"/>
<dbReference type="TreeFam" id="TF315442"/>
<dbReference type="PathwayCommons" id="Q8TE12"/>
<dbReference type="SignaLink" id="Q8TE12"/>
<dbReference type="SIGNOR" id="Q8TE12"/>
<dbReference type="BioGRID-ORCS" id="4009">
    <property type="hits" value="16 hits in 1172 CRISPR screens"/>
</dbReference>
<dbReference type="ChiTaRS" id="LMX1A">
    <property type="organism name" value="human"/>
</dbReference>
<dbReference type="GeneWiki" id="LMX1A"/>
<dbReference type="GenomeRNAi" id="4009"/>
<dbReference type="Pharos" id="Q8TE12">
    <property type="development level" value="Tbio"/>
</dbReference>
<dbReference type="PRO" id="PR:Q8TE12"/>
<dbReference type="Proteomes" id="UP000005640">
    <property type="component" value="Chromosome 1"/>
</dbReference>
<dbReference type="RNAct" id="Q8TE12">
    <property type="molecule type" value="protein"/>
</dbReference>
<dbReference type="Bgee" id="ENSG00000162761">
    <property type="expression patterns" value="Expressed in male germ line stem cell (sensu Vertebrata) in testis and 63 other cell types or tissues"/>
</dbReference>
<dbReference type="GO" id="GO:0000785">
    <property type="term" value="C:chromatin"/>
    <property type="evidence" value="ECO:0000247"/>
    <property type="project" value="NTNU_SB"/>
</dbReference>
<dbReference type="GO" id="GO:0005634">
    <property type="term" value="C:nucleus"/>
    <property type="evidence" value="ECO:0000318"/>
    <property type="project" value="GO_Central"/>
</dbReference>
<dbReference type="GO" id="GO:0001228">
    <property type="term" value="F:DNA-binding transcription activator activity, RNA polymerase II-specific"/>
    <property type="evidence" value="ECO:0000250"/>
    <property type="project" value="ParkinsonsUK-UCL"/>
</dbReference>
<dbReference type="GO" id="GO:0000981">
    <property type="term" value="F:DNA-binding transcription factor activity, RNA polymerase II-specific"/>
    <property type="evidence" value="ECO:0000247"/>
    <property type="project" value="NTNU_SB"/>
</dbReference>
<dbReference type="GO" id="GO:0046872">
    <property type="term" value="F:metal ion binding"/>
    <property type="evidence" value="ECO:0007669"/>
    <property type="project" value="UniProtKB-KW"/>
</dbReference>
<dbReference type="GO" id="GO:0000977">
    <property type="term" value="F:RNA polymerase II transcription regulatory region sequence-specific DNA binding"/>
    <property type="evidence" value="ECO:0000250"/>
    <property type="project" value="ParkinsonsUK-UCL"/>
</dbReference>
<dbReference type="GO" id="GO:1990837">
    <property type="term" value="F:sequence-specific double-stranded DNA binding"/>
    <property type="evidence" value="ECO:0000314"/>
    <property type="project" value="ARUK-UCL"/>
</dbReference>
<dbReference type="GO" id="GO:0007411">
    <property type="term" value="P:axon guidance"/>
    <property type="evidence" value="ECO:0007669"/>
    <property type="project" value="Ensembl"/>
</dbReference>
<dbReference type="GO" id="GO:0021549">
    <property type="term" value="P:cerebellum development"/>
    <property type="evidence" value="ECO:0007669"/>
    <property type="project" value="Ensembl"/>
</dbReference>
<dbReference type="GO" id="GO:0021542">
    <property type="term" value="P:dentate gyrus development"/>
    <property type="evidence" value="ECO:0007669"/>
    <property type="project" value="Ensembl"/>
</dbReference>
<dbReference type="GO" id="GO:0071542">
    <property type="term" value="P:dopaminergic neuron differentiation"/>
    <property type="evidence" value="ECO:0000304"/>
    <property type="project" value="ParkinsonsUK-UCL"/>
</dbReference>
<dbReference type="GO" id="GO:0007626">
    <property type="term" value="P:locomotory behavior"/>
    <property type="evidence" value="ECO:0007669"/>
    <property type="project" value="Ensembl"/>
</dbReference>
<dbReference type="GO" id="GO:0007613">
    <property type="term" value="P:memory"/>
    <property type="evidence" value="ECO:0007669"/>
    <property type="project" value="Ensembl"/>
</dbReference>
<dbReference type="GO" id="GO:1904948">
    <property type="term" value="P:midbrain dopaminergic neuron differentiation"/>
    <property type="evidence" value="ECO:0000250"/>
    <property type="project" value="ParkinsonsUK-UCL"/>
</dbReference>
<dbReference type="GO" id="GO:0045665">
    <property type="term" value="P:negative regulation of neuron differentiation"/>
    <property type="evidence" value="ECO:0007669"/>
    <property type="project" value="Ensembl"/>
</dbReference>
<dbReference type="GO" id="GO:0030182">
    <property type="term" value="P:neuron differentiation"/>
    <property type="evidence" value="ECO:0000318"/>
    <property type="project" value="GO_Central"/>
</dbReference>
<dbReference type="GO" id="GO:0042048">
    <property type="term" value="P:olfactory behavior"/>
    <property type="evidence" value="ECO:0007669"/>
    <property type="project" value="Ensembl"/>
</dbReference>
<dbReference type="GO" id="GO:0045944">
    <property type="term" value="P:positive regulation of transcription by RNA polymerase II"/>
    <property type="evidence" value="ECO:0000250"/>
    <property type="project" value="ParkinsonsUK-UCL"/>
</dbReference>
<dbReference type="GO" id="GO:0001558">
    <property type="term" value="P:regulation of cell growth"/>
    <property type="evidence" value="ECO:0007669"/>
    <property type="project" value="Ensembl"/>
</dbReference>
<dbReference type="GO" id="GO:0006357">
    <property type="term" value="P:regulation of transcription by RNA polymerase II"/>
    <property type="evidence" value="ECO:0000318"/>
    <property type="project" value="GO_Central"/>
</dbReference>
<dbReference type="GO" id="GO:0050808">
    <property type="term" value="P:synapse organization"/>
    <property type="evidence" value="ECO:0007669"/>
    <property type="project" value="Ensembl"/>
</dbReference>
<dbReference type="CDD" id="cd00086">
    <property type="entry name" value="homeodomain"/>
    <property type="match status" value="1"/>
</dbReference>
<dbReference type="CDD" id="cd09370">
    <property type="entry name" value="LIM1_Lmx1a"/>
    <property type="match status" value="1"/>
</dbReference>
<dbReference type="CDD" id="cd09378">
    <property type="entry name" value="LIM2_Lmx1a_Lmx1b"/>
    <property type="match status" value="1"/>
</dbReference>
<dbReference type="FunFam" id="1.10.10.60:FF:000095">
    <property type="entry name" value="LIM homeobox transcription factor 1 beta"/>
    <property type="match status" value="1"/>
</dbReference>
<dbReference type="FunFam" id="2.10.110.10:FF:000040">
    <property type="entry name" value="LIM homeobox transcription factor 1 beta"/>
    <property type="match status" value="1"/>
</dbReference>
<dbReference type="FunFam" id="2.10.110.10:FF:000006">
    <property type="entry name" value="LIM homeobox transcription factor 1-beta"/>
    <property type="match status" value="1"/>
</dbReference>
<dbReference type="Gene3D" id="2.10.110.10">
    <property type="entry name" value="Cysteine Rich Protein"/>
    <property type="match status" value="2"/>
</dbReference>
<dbReference type="Gene3D" id="1.10.10.60">
    <property type="entry name" value="Homeodomain-like"/>
    <property type="match status" value="1"/>
</dbReference>
<dbReference type="InterPro" id="IPR001356">
    <property type="entry name" value="HD"/>
</dbReference>
<dbReference type="InterPro" id="IPR017970">
    <property type="entry name" value="Homeobox_CS"/>
</dbReference>
<dbReference type="InterPro" id="IPR009057">
    <property type="entry name" value="Homeodomain-like_sf"/>
</dbReference>
<dbReference type="InterPro" id="IPR050453">
    <property type="entry name" value="LIM_Homeobox_TF"/>
</dbReference>
<dbReference type="InterPro" id="IPR042688">
    <property type="entry name" value="Lmx1a_LIM1"/>
</dbReference>
<dbReference type="InterPro" id="IPR001781">
    <property type="entry name" value="Znf_LIM"/>
</dbReference>
<dbReference type="PANTHER" id="PTHR24208:SF88">
    <property type="entry name" value="LIM HOMEOBOX TRANSCRIPTION FACTOR 1-ALPHA"/>
    <property type="match status" value="1"/>
</dbReference>
<dbReference type="PANTHER" id="PTHR24208">
    <property type="entry name" value="LIM/HOMEOBOX PROTEIN LHX"/>
    <property type="match status" value="1"/>
</dbReference>
<dbReference type="Pfam" id="PF00046">
    <property type="entry name" value="Homeodomain"/>
    <property type="match status" value="1"/>
</dbReference>
<dbReference type="Pfam" id="PF00412">
    <property type="entry name" value="LIM"/>
    <property type="match status" value="2"/>
</dbReference>
<dbReference type="SMART" id="SM00389">
    <property type="entry name" value="HOX"/>
    <property type="match status" value="1"/>
</dbReference>
<dbReference type="SMART" id="SM00132">
    <property type="entry name" value="LIM"/>
    <property type="match status" value="2"/>
</dbReference>
<dbReference type="SUPFAM" id="SSF57716">
    <property type="entry name" value="Glucocorticoid receptor-like (DNA-binding domain)"/>
    <property type="match status" value="2"/>
</dbReference>
<dbReference type="SUPFAM" id="SSF46689">
    <property type="entry name" value="Homeodomain-like"/>
    <property type="match status" value="1"/>
</dbReference>
<dbReference type="PROSITE" id="PS00027">
    <property type="entry name" value="HOMEOBOX_1"/>
    <property type="match status" value="1"/>
</dbReference>
<dbReference type="PROSITE" id="PS50071">
    <property type="entry name" value="HOMEOBOX_2"/>
    <property type="match status" value="1"/>
</dbReference>
<dbReference type="PROSITE" id="PS00478">
    <property type="entry name" value="LIM_DOMAIN_1"/>
    <property type="match status" value="2"/>
</dbReference>
<dbReference type="PROSITE" id="PS50023">
    <property type="entry name" value="LIM_DOMAIN_2"/>
    <property type="match status" value="2"/>
</dbReference>
<keyword id="KW-0002">3D-structure</keyword>
<keyword id="KW-0010">Activator</keyword>
<keyword id="KW-0025">Alternative splicing</keyword>
<keyword id="KW-0209">Deafness</keyword>
<keyword id="KW-0217">Developmental protein</keyword>
<keyword id="KW-0225">Disease variant</keyword>
<keyword id="KW-0238">DNA-binding</keyword>
<keyword id="KW-0371">Homeobox</keyword>
<keyword id="KW-0440">LIM domain</keyword>
<keyword id="KW-0479">Metal-binding</keyword>
<keyword id="KW-1010">Non-syndromic deafness</keyword>
<keyword id="KW-0539">Nucleus</keyword>
<keyword id="KW-1267">Proteomics identification</keyword>
<keyword id="KW-1185">Reference proteome</keyword>
<keyword id="KW-0677">Repeat</keyword>
<keyword id="KW-0804">Transcription</keyword>
<keyword id="KW-0805">Transcription regulation</keyword>
<keyword id="KW-0862">Zinc</keyword>
<sequence length="382" mass="42747">MLDGLKMEENFQSAIDTSASFSSLLGRAVSPKSVCEGCQRVILDRFLLRLNDSFWHEQCVQCASCKEPLETTCFYRDKKLYCKYDYEKLFAVKCGGCFEAIAPNEFVMRAQKSVYHLSCFCCCVCERQLQKGDEFVLKEGQLLCKGDYEKERELLSLVSPAASDSGKSDDEESLCKSAHGAGKGTAEEGKDHKRPKRPRTILTTQQRRAFKASFEVSSKPCRKVRETLAAETGLSVRVVQVWFQNQRAKMKKLARRQQQQQQDQQNTQRLSSAQTNGGGSAGMEGIMNPYTALPTPQQLLAIEQSVYSSDPFRQGLTPPQMPGDHMHPYGAEPLFHDLDSDDTSLSNLGDCFLATSEAGPLQSRVGNPIDHLYSMQNSYFTS</sequence>
<feature type="chain" id="PRO_0000075825" description="LIM homeobox transcription factor 1-alpha">
    <location>
        <begin position="1"/>
        <end position="382"/>
    </location>
</feature>
<feature type="domain" description="LIM zinc-binding 1" evidence="3">
    <location>
        <begin position="33"/>
        <end position="92"/>
    </location>
</feature>
<feature type="domain" description="LIM zinc-binding 2" evidence="3">
    <location>
        <begin position="92"/>
        <end position="154"/>
    </location>
</feature>
<feature type="DNA-binding region" description="Homeobox" evidence="2">
    <location>
        <begin position="195"/>
        <end position="254"/>
    </location>
</feature>
<feature type="region of interest" description="Disordered" evidence="4">
    <location>
        <begin position="161"/>
        <end position="208"/>
    </location>
</feature>
<feature type="region of interest" description="Disordered" evidence="4">
    <location>
        <begin position="252"/>
        <end position="285"/>
    </location>
</feature>
<feature type="compositionally biased region" description="Low complexity" evidence="4">
    <location>
        <begin position="256"/>
        <end position="269"/>
    </location>
</feature>
<feature type="splice variant" id="VSP_003112" description="In isoform LMX1A-4AB." evidence="8">
    <location>
        <begin position="1"/>
        <end position="249"/>
    </location>
</feature>
<feature type="sequence variant" id="VAR_083732" description="In DFNA7; uncertain significance." evidence="6">
    <original>C</original>
    <variation>S</variation>
    <location>
        <position position="97"/>
    </location>
</feature>
<feature type="sequence variant" id="VAR_083733" evidence="6">
    <original>E</original>
    <variation>K</variation>
    <location>
        <position position="126"/>
    </location>
</feature>
<feature type="sequence variant" id="VAR_083734" description="In DFNA7." evidence="6">
    <original>V</original>
    <variation>L</variation>
    <location>
        <position position="241"/>
    </location>
</feature>
<feature type="sequence variant" id="VAR_083735" description="Found in autosomal recessive sensorineural hearing loss; uncertain significance." evidence="7">
    <original>I</original>
    <variation>T</variation>
    <location>
        <position position="369"/>
    </location>
</feature>
<feature type="helix" evidence="9">
    <location>
        <begin position="204"/>
        <end position="216"/>
    </location>
</feature>
<feature type="helix" evidence="9">
    <location>
        <begin position="222"/>
        <end position="232"/>
    </location>
</feature>
<feature type="helix" evidence="9">
    <location>
        <begin position="236"/>
        <end position="253"/>
    </location>
</feature>
<gene>
    <name type="primary">LMX1A</name>
</gene>
<protein>
    <recommendedName>
        <fullName>LIM homeobox transcription factor 1-alpha</fullName>
    </recommendedName>
    <alternativeName>
        <fullName>LIM/homeobox protein 1.1</fullName>
        <shortName>LMX-1.1</shortName>
    </alternativeName>
    <alternativeName>
        <fullName>LIM/homeobox protein LMX1A</fullName>
    </alternativeName>
</protein>
<evidence type="ECO:0000250" key="1"/>
<evidence type="ECO:0000255" key="2">
    <source>
        <dbReference type="PROSITE-ProRule" id="PRU00108"/>
    </source>
</evidence>
<evidence type="ECO:0000255" key="3">
    <source>
        <dbReference type="PROSITE-ProRule" id="PRU00125"/>
    </source>
</evidence>
<evidence type="ECO:0000256" key="4">
    <source>
        <dbReference type="SAM" id="MobiDB-lite"/>
    </source>
</evidence>
<evidence type="ECO:0000269" key="5">
    <source>
    </source>
</evidence>
<evidence type="ECO:0000269" key="6">
    <source>
    </source>
</evidence>
<evidence type="ECO:0000269" key="7">
    <source>
    </source>
</evidence>
<evidence type="ECO:0000303" key="8">
    <source>
    </source>
</evidence>
<evidence type="ECO:0007829" key="9">
    <source>
        <dbReference type="PDB" id="8IK5"/>
    </source>
</evidence>
<proteinExistence type="evidence at protein level"/>
<name>LMX1A_HUMAN</name>
<comment type="function">
    <text evidence="1">Acts as a transcriptional activator by binding to an A/T-rich sequence, the FLAT element, in the insulin gene promoter. Required for development of the roof plate and, in turn, for specification of dorsal cell fates in the CNS and developing vertebrae (By similarity).</text>
</comment>
<comment type="interaction">
    <interactant intactId="EBI-10692065">
        <id>Q8TE12</id>
    </interactant>
    <interactant intactId="EBI-401755">
        <id>P62993</id>
        <label>GRB2</label>
    </interactant>
    <organismsDiffer>false</organismsDiffer>
    <experiments>3</experiments>
</comment>
<comment type="interaction">
    <interactant intactId="EBI-25846312">
        <id>Q8TE12-2</id>
    </interactant>
    <interactant intactId="EBI-11954292">
        <id>Q86V38</id>
        <label>ATN1</label>
    </interactant>
    <organismsDiffer>false</organismsDiffer>
    <experiments>3</experiments>
</comment>
<comment type="interaction">
    <interactant intactId="EBI-25846312">
        <id>Q8TE12-2</id>
    </interactant>
    <interactant intactId="EBI-2432309">
        <id>Q92876</id>
        <label>KLK6</label>
    </interactant>
    <organismsDiffer>false</organismsDiffer>
    <experiments>3</experiments>
</comment>
<comment type="subcellular location">
    <subcellularLocation>
        <location evidence="2">Nucleus</location>
    </subcellularLocation>
</comment>
<comment type="alternative products">
    <event type="alternative splicing"/>
    <isoform>
        <id>Q8TE12-1</id>
        <name>1</name>
        <sequence type="displayed"/>
    </isoform>
    <isoform>
        <id>Q8TE12-2</id>
        <name>LMX1A-4AB</name>
        <sequence type="described" ref="VSP_003112"/>
    </isoform>
</comment>
<comment type="tissue specificity">
    <text evidence="5">Isoform 1 is expressed in many tissues. Not found in heart, liver, spleen and testis. Relatively highly expressed in fetal brain. Isoform LMX1A-4AB is expressed in testis.</text>
</comment>
<comment type="disease" evidence="6">
    <disease id="DI-05774">
        <name>Deafness, autosomal dominant, 7</name>
        <acronym>DFNA7</acronym>
        <description>A form of non-syndromic sensorineural hearing loss. Sensorineural deafness results from damage to the neural receptors of the inner ear, the nerve pathways to the brain, or the area of the brain that receives sound information. DFNA7 is a progressive form with highly variable age at onset and severity, even within families. The age at onset ranges from congenital to mid-adulthood.</description>
        <dbReference type="MIM" id="601412"/>
    </disease>
    <text>The disease is caused by variants affecting the gene represented in this entry.</text>
</comment>
<reference key="1">
    <citation type="journal article" date="2002" name="Gene">
        <title>Cloning, expression and genomic structure of human LMX1A, and variant screening in Pima Indians.</title>
        <authorList>
            <person name="Thameem F."/>
            <person name="Wolford J.K."/>
            <person name="Wang J."/>
            <person name="German M.S."/>
            <person name="Bogardus C."/>
            <person name="Prochazka M."/>
        </authorList>
    </citation>
    <scope>NUCLEOTIDE SEQUENCE [GENOMIC DNA]</scope>
    <scope>ALTERNATIVE SPLICING</scope>
    <scope>TISSUE SPECIFICITY</scope>
</reference>
<reference key="2">
    <citation type="journal article" date="2004" name="Nat. Genet.">
        <title>Complete sequencing and characterization of 21,243 full-length human cDNAs.</title>
        <authorList>
            <person name="Ota T."/>
            <person name="Suzuki Y."/>
            <person name="Nishikawa T."/>
            <person name="Otsuki T."/>
            <person name="Sugiyama T."/>
            <person name="Irie R."/>
            <person name="Wakamatsu A."/>
            <person name="Hayashi K."/>
            <person name="Sato H."/>
            <person name="Nagai K."/>
            <person name="Kimura K."/>
            <person name="Makita H."/>
            <person name="Sekine M."/>
            <person name="Obayashi M."/>
            <person name="Nishi T."/>
            <person name="Shibahara T."/>
            <person name="Tanaka T."/>
            <person name="Ishii S."/>
            <person name="Yamamoto J."/>
            <person name="Saito K."/>
            <person name="Kawai Y."/>
            <person name="Isono Y."/>
            <person name="Nakamura Y."/>
            <person name="Nagahari K."/>
            <person name="Murakami K."/>
            <person name="Yasuda T."/>
            <person name="Iwayanagi T."/>
            <person name="Wagatsuma M."/>
            <person name="Shiratori A."/>
            <person name="Sudo H."/>
            <person name="Hosoiri T."/>
            <person name="Kaku Y."/>
            <person name="Kodaira H."/>
            <person name="Kondo H."/>
            <person name="Sugawara M."/>
            <person name="Takahashi M."/>
            <person name="Kanda K."/>
            <person name="Yokoi T."/>
            <person name="Furuya T."/>
            <person name="Kikkawa E."/>
            <person name="Omura Y."/>
            <person name="Abe K."/>
            <person name="Kamihara K."/>
            <person name="Katsuta N."/>
            <person name="Sato K."/>
            <person name="Tanikawa M."/>
            <person name="Yamazaki M."/>
            <person name="Ninomiya K."/>
            <person name="Ishibashi T."/>
            <person name="Yamashita H."/>
            <person name="Murakawa K."/>
            <person name="Fujimori K."/>
            <person name="Tanai H."/>
            <person name="Kimata M."/>
            <person name="Watanabe M."/>
            <person name="Hiraoka S."/>
            <person name="Chiba Y."/>
            <person name="Ishida S."/>
            <person name="Ono Y."/>
            <person name="Takiguchi S."/>
            <person name="Watanabe S."/>
            <person name="Yosida M."/>
            <person name="Hotuta T."/>
            <person name="Kusano J."/>
            <person name="Kanehori K."/>
            <person name="Takahashi-Fujii A."/>
            <person name="Hara H."/>
            <person name="Tanase T.-O."/>
            <person name="Nomura Y."/>
            <person name="Togiya S."/>
            <person name="Komai F."/>
            <person name="Hara R."/>
            <person name="Takeuchi K."/>
            <person name="Arita M."/>
            <person name="Imose N."/>
            <person name="Musashino K."/>
            <person name="Yuuki H."/>
            <person name="Oshima A."/>
            <person name="Sasaki N."/>
            <person name="Aotsuka S."/>
            <person name="Yoshikawa Y."/>
            <person name="Matsunawa H."/>
            <person name="Ichihara T."/>
            <person name="Shiohata N."/>
            <person name="Sano S."/>
            <person name="Moriya S."/>
            <person name="Momiyama H."/>
            <person name="Satoh N."/>
            <person name="Takami S."/>
            <person name="Terashima Y."/>
            <person name="Suzuki O."/>
            <person name="Nakagawa S."/>
            <person name="Senoh A."/>
            <person name="Mizoguchi H."/>
            <person name="Goto Y."/>
            <person name="Shimizu F."/>
            <person name="Wakebe H."/>
            <person name="Hishigaki H."/>
            <person name="Watanabe T."/>
            <person name="Sugiyama A."/>
            <person name="Takemoto M."/>
            <person name="Kawakami B."/>
            <person name="Yamazaki M."/>
            <person name="Watanabe K."/>
            <person name="Kumagai A."/>
            <person name="Itakura S."/>
            <person name="Fukuzumi Y."/>
            <person name="Fujimori Y."/>
            <person name="Komiyama M."/>
            <person name="Tashiro H."/>
            <person name="Tanigami A."/>
            <person name="Fujiwara T."/>
            <person name="Ono T."/>
            <person name="Yamada K."/>
            <person name="Fujii Y."/>
            <person name="Ozaki K."/>
            <person name="Hirao M."/>
            <person name="Ohmori Y."/>
            <person name="Kawabata A."/>
            <person name="Hikiji T."/>
            <person name="Kobatake N."/>
            <person name="Inagaki H."/>
            <person name="Ikema Y."/>
            <person name="Okamoto S."/>
            <person name="Okitani R."/>
            <person name="Kawakami T."/>
            <person name="Noguchi S."/>
            <person name="Itoh T."/>
            <person name="Shigeta K."/>
            <person name="Senba T."/>
            <person name="Matsumura K."/>
            <person name="Nakajima Y."/>
            <person name="Mizuno T."/>
            <person name="Morinaga M."/>
            <person name="Sasaki M."/>
            <person name="Togashi T."/>
            <person name="Oyama M."/>
            <person name="Hata H."/>
            <person name="Watanabe M."/>
            <person name="Komatsu T."/>
            <person name="Mizushima-Sugano J."/>
            <person name="Satoh T."/>
            <person name="Shirai Y."/>
            <person name="Takahashi Y."/>
            <person name="Nakagawa K."/>
            <person name="Okumura K."/>
            <person name="Nagase T."/>
            <person name="Nomura N."/>
            <person name="Kikuchi H."/>
            <person name="Masuho Y."/>
            <person name="Yamashita R."/>
            <person name="Nakai K."/>
            <person name="Yada T."/>
            <person name="Nakamura Y."/>
            <person name="Ohara O."/>
            <person name="Isogai T."/>
            <person name="Sugano S."/>
        </authorList>
    </citation>
    <scope>NUCLEOTIDE SEQUENCE [LARGE SCALE MRNA] (ISOFORM 1)</scope>
</reference>
<reference key="3">
    <citation type="journal article" date="2006" name="Nature">
        <title>The DNA sequence and biological annotation of human chromosome 1.</title>
        <authorList>
            <person name="Gregory S.G."/>
            <person name="Barlow K.F."/>
            <person name="McLay K.E."/>
            <person name="Kaul R."/>
            <person name="Swarbreck D."/>
            <person name="Dunham A."/>
            <person name="Scott C.E."/>
            <person name="Howe K.L."/>
            <person name="Woodfine K."/>
            <person name="Spencer C.C.A."/>
            <person name="Jones M.C."/>
            <person name="Gillson C."/>
            <person name="Searle S."/>
            <person name="Zhou Y."/>
            <person name="Kokocinski F."/>
            <person name="McDonald L."/>
            <person name="Evans R."/>
            <person name="Phillips K."/>
            <person name="Atkinson A."/>
            <person name="Cooper R."/>
            <person name="Jones C."/>
            <person name="Hall R.E."/>
            <person name="Andrews T.D."/>
            <person name="Lloyd C."/>
            <person name="Ainscough R."/>
            <person name="Almeida J.P."/>
            <person name="Ambrose K.D."/>
            <person name="Anderson F."/>
            <person name="Andrew R.W."/>
            <person name="Ashwell R.I.S."/>
            <person name="Aubin K."/>
            <person name="Babbage A.K."/>
            <person name="Bagguley C.L."/>
            <person name="Bailey J."/>
            <person name="Beasley H."/>
            <person name="Bethel G."/>
            <person name="Bird C.P."/>
            <person name="Bray-Allen S."/>
            <person name="Brown J.Y."/>
            <person name="Brown A.J."/>
            <person name="Buckley D."/>
            <person name="Burton J."/>
            <person name="Bye J."/>
            <person name="Carder C."/>
            <person name="Chapman J.C."/>
            <person name="Clark S.Y."/>
            <person name="Clarke G."/>
            <person name="Clee C."/>
            <person name="Cobley V."/>
            <person name="Collier R.E."/>
            <person name="Corby N."/>
            <person name="Coville G.J."/>
            <person name="Davies J."/>
            <person name="Deadman R."/>
            <person name="Dunn M."/>
            <person name="Earthrowl M."/>
            <person name="Ellington A.G."/>
            <person name="Errington H."/>
            <person name="Frankish A."/>
            <person name="Frankland J."/>
            <person name="French L."/>
            <person name="Garner P."/>
            <person name="Garnett J."/>
            <person name="Gay L."/>
            <person name="Ghori M.R.J."/>
            <person name="Gibson R."/>
            <person name="Gilby L.M."/>
            <person name="Gillett W."/>
            <person name="Glithero R.J."/>
            <person name="Grafham D.V."/>
            <person name="Griffiths C."/>
            <person name="Griffiths-Jones S."/>
            <person name="Grocock R."/>
            <person name="Hammond S."/>
            <person name="Harrison E.S.I."/>
            <person name="Hart E."/>
            <person name="Haugen E."/>
            <person name="Heath P.D."/>
            <person name="Holmes S."/>
            <person name="Holt K."/>
            <person name="Howden P.J."/>
            <person name="Hunt A.R."/>
            <person name="Hunt S.E."/>
            <person name="Hunter G."/>
            <person name="Isherwood J."/>
            <person name="James R."/>
            <person name="Johnson C."/>
            <person name="Johnson D."/>
            <person name="Joy A."/>
            <person name="Kay M."/>
            <person name="Kershaw J.K."/>
            <person name="Kibukawa M."/>
            <person name="Kimberley A.M."/>
            <person name="King A."/>
            <person name="Knights A.J."/>
            <person name="Lad H."/>
            <person name="Laird G."/>
            <person name="Lawlor S."/>
            <person name="Leongamornlert D.A."/>
            <person name="Lloyd D.M."/>
            <person name="Loveland J."/>
            <person name="Lovell J."/>
            <person name="Lush M.J."/>
            <person name="Lyne R."/>
            <person name="Martin S."/>
            <person name="Mashreghi-Mohammadi M."/>
            <person name="Matthews L."/>
            <person name="Matthews N.S.W."/>
            <person name="McLaren S."/>
            <person name="Milne S."/>
            <person name="Mistry S."/>
            <person name="Moore M.J.F."/>
            <person name="Nickerson T."/>
            <person name="O'Dell C.N."/>
            <person name="Oliver K."/>
            <person name="Palmeiri A."/>
            <person name="Palmer S.A."/>
            <person name="Parker A."/>
            <person name="Patel D."/>
            <person name="Pearce A.V."/>
            <person name="Peck A.I."/>
            <person name="Pelan S."/>
            <person name="Phelps K."/>
            <person name="Phillimore B.J."/>
            <person name="Plumb R."/>
            <person name="Rajan J."/>
            <person name="Raymond C."/>
            <person name="Rouse G."/>
            <person name="Saenphimmachak C."/>
            <person name="Sehra H.K."/>
            <person name="Sheridan E."/>
            <person name="Shownkeen R."/>
            <person name="Sims S."/>
            <person name="Skuce C.D."/>
            <person name="Smith M."/>
            <person name="Steward C."/>
            <person name="Subramanian S."/>
            <person name="Sycamore N."/>
            <person name="Tracey A."/>
            <person name="Tromans A."/>
            <person name="Van Helmond Z."/>
            <person name="Wall M."/>
            <person name="Wallis J.M."/>
            <person name="White S."/>
            <person name="Whitehead S.L."/>
            <person name="Wilkinson J.E."/>
            <person name="Willey D.L."/>
            <person name="Williams H."/>
            <person name="Wilming L."/>
            <person name="Wray P.W."/>
            <person name="Wu Z."/>
            <person name="Coulson A."/>
            <person name="Vaudin M."/>
            <person name="Sulston J.E."/>
            <person name="Durbin R.M."/>
            <person name="Hubbard T."/>
            <person name="Wooster R."/>
            <person name="Dunham I."/>
            <person name="Carter N.P."/>
            <person name="McVean G."/>
            <person name="Ross M.T."/>
            <person name="Harrow J."/>
            <person name="Olson M.V."/>
            <person name="Beck S."/>
            <person name="Rogers J."/>
            <person name="Bentley D.R."/>
        </authorList>
    </citation>
    <scope>NUCLEOTIDE SEQUENCE [LARGE SCALE GENOMIC DNA]</scope>
</reference>
<reference key="4">
    <citation type="submission" date="2005-07" db="EMBL/GenBank/DDBJ databases">
        <authorList>
            <person name="Mural R.J."/>
            <person name="Istrail S."/>
            <person name="Sutton G.G."/>
            <person name="Florea L."/>
            <person name="Halpern A.L."/>
            <person name="Mobarry C.M."/>
            <person name="Lippert R."/>
            <person name="Walenz B."/>
            <person name="Shatkay H."/>
            <person name="Dew I."/>
            <person name="Miller J.R."/>
            <person name="Flanigan M.J."/>
            <person name="Edwards N.J."/>
            <person name="Bolanos R."/>
            <person name="Fasulo D."/>
            <person name="Halldorsson B.V."/>
            <person name="Hannenhalli S."/>
            <person name="Turner R."/>
            <person name="Yooseph S."/>
            <person name="Lu F."/>
            <person name="Nusskern D.R."/>
            <person name="Shue B.C."/>
            <person name="Zheng X.H."/>
            <person name="Zhong F."/>
            <person name="Delcher A.L."/>
            <person name="Huson D.H."/>
            <person name="Kravitz S.A."/>
            <person name="Mouchard L."/>
            <person name="Reinert K."/>
            <person name="Remington K.A."/>
            <person name="Clark A.G."/>
            <person name="Waterman M.S."/>
            <person name="Eichler E.E."/>
            <person name="Adams M.D."/>
            <person name="Hunkapiller M.W."/>
            <person name="Myers E.W."/>
            <person name="Venter J.C."/>
        </authorList>
    </citation>
    <scope>NUCLEOTIDE SEQUENCE [LARGE SCALE GENOMIC DNA]</scope>
</reference>
<reference key="5">
    <citation type="journal article" date="2004" name="Genome Res.">
        <title>The status, quality, and expansion of the NIH full-length cDNA project: the Mammalian Gene Collection (MGC).</title>
        <authorList>
            <consortium name="The MGC Project Team"/>
        </authorList>
    </citation>
    <scope>NUCLEOTIDE SEQUENCE [LARGE SCALE MRNA] (ISOFORM LMX1A-4AB)</scope>
</reference>
<reference key="6">
    <citation type="journal article" date="2018" name="Hum. Genet.">
        <title>Heterozygous missense variants of LMX1A lead to nonsyndromic hearing impairment and vestibular dysfunction.</title>
        <authorList>
            <consortium name="DOOFNL Consortium"/>
            <person name="Wesdorp M."/>
            <person name="de Koning Gans P.A.M."/>
            <person name="Schraders M."/>
            <person name="Oostrik J."/>
            <person name="Huynen M.A."/>
            <person name="Venselaar H."/>
            <person name="Beynon A.J."/>
            <person name="van Gaalen J."/>
            <person name="Piai V."/>
            <person name="Voermans N."/>
            <person name="van Rossum M.M."/>
            <person name="Hartel B.P."/>
            <person name="Lelieveld S.H."/>
            <person name="Wiel L."/>
            <person name="Verbist B."/>
            <person name="Rotteveel L.J."/>
            <person name="van Dooren M.F."/>
            <person name="Lichtner P."/>
            <person name="Kunst H.P.M."/>
            <person name="Feenstra I."/>
            <person name="Admiraal R.J.C."/>
            <person name="Yntema H.G."/>
            <person name="Hoefsloot L.H."/>
            <person name="Pennings R.J.E."/>
            <person name="Kremer H."/>
        </authorList>
    </citation>
    <scope>INVOLVEMENT IN DFNA7</scope>
    <scope>VARIANTS DFNA7 SER-97 AND LEU-241</scope>
    <scope>VARIANT LYS-126</scope>
</reference>
<reference key="7">
    <citation type="journal article" date="2018" name="Hum. Genet.">
        <title>A variant in LMX1A causes autosomal recessive severe-to-profound hearing impairment.</title>
        <authorList>
            <person name="Schrauwen I."/>
            <person name="Chakchouk I."/>
            <person name="Liaqat K."/>
            <person name="Jan A."/>
            <person name="Nasir A."/>
            <person name="Hussain S."/>
            <person name="Nickerson D.A."/>
            <person name="Bamshad M.J."/>
            <person name="Ullah A."/>
            <person name="Ahmad W."/>
            <person name="Leal S.M."/>
        </authorList>
    </citation>
    <scope>VARIANT THR-369</scope>
</reference>
<accession>Q8TE12</accession>
<accession>B3KXP6</accession>
<accession>Q0VDB5</accession>
<accession>Q5VWG4</accession>
<accession>Q8TE11</accession>